<organism>
    <name type="scientific">Salmonella newport (strain SL254)</name>
    <dbReference type="NCBI Taxonomy" id="423368"/>
    <lineage>
        <taxon>Bacteria</taxon>
        <taxon>Pseudomonadati</taxon>
        <taxon>Pseudomonadota</taxon>
        <taxon>Gammaproteobacteria</taxon>
        <taxon>Enterobacterales</taxon>
        <taxon>Enterobacteriaceae</taxon>
        <taxon>Salmonella</taxon>
    </lineage>
</organism>
<gene>
    <name evidence="1" type="primary">kdsB</name>
    <name type="ordered locus">SNSL254_A1021</name>
</gene>
<comment type="function">
    <text evidence="1">Activates KDO (a required 8-carbon sugar) for incorporation into bacterial lipopolysaccharide in Gram-negative bacteria.</text>
</comment>
<comment type="catalytic activity">
    <reaction evidence="1">
        <text>3-deoxy-alpha-D-manno-oct-2-ulosonate + CTP = CMP-3-deoxy-beta-D-manno-octulosonate + diphosphate</text>
        <dbReference type="Rhea" id="RHEA:23448"/>
        <dbReference type="ChEBI" id="CHEBI:33019"/>
        <dbReference type="ChEBI" id="CHEBI:37563"/>
        <dbReference type="ChEBI" id="CHEBI:85986"/>
        <dbReference type="ChEBI" id="CHEBI:85987"/>
        <dbReference type="EC" id="2.7.7.38"/>
    </reaction>
</comment>
<comment type="pathway">
    <text evidence="1">Nucleotide-sugar biosynthesis; CMP-3-deoxy-D-manno-octulosonate biosynthesis; CMP-3-deoxy-D-manno-octulosonate from 3-deoxy-D-manno-octulosonate and CTP: step 1/1.</text>
</comment>
<comment type="pathway">
    <text evidence="1">Bacterial outer membrane biogenesis; lipopolysaccharide biosynthesis.</text>
</comment>
<comment type="subcellular location">
    <subcellularLocation>
        <location evidence="1">Cytoplasm</location>
    </subcellularLocation>
</comment>
<comment type="similarity">
    <text evidence="1">Belongs to the KdsB family.</text>
</comment>
<protein>
    <recommendedName>
        <fullName evidence="1">3-deoxy-manno-octulosonate cytidylyltransferase</fullName>
        <ecNumber evidence="1">2.7.7.38</ecNumber>
    </recommendedName>
    <alternativeName>
        <fullName evidence="1">CMP-2-keto-3-deoxyoctulosonic acid synthase</fullName>
        <shortName evidence="1">CKS</shortName>
        <shortName evidence="1">CMP-KDO synthase</shortName>
    </alternativeName>
</protein>
<evidence type="ECO:0000255" key="1">
    <source>
        <dbReference type="HAMAP-Rule" id="MF_00057"/>
    </source>
</evidence>
<proteinExistence type="inferred from homology"/>
<accession>B4T152</accession>
<name>KDSB_SALNS</name>
<keyword id="KW-0963">Cytoplasm</keyword>
<keyword id="KW-0448">Lipopolysaccharide biosynthesis</keyword>
<keyword id="KW-0548">Nucleotidyltransferase</keyword>
<keyword id="KW-0808">Transferase</keyword>
<feature type="chain" id="PRO_1000091904" description="3-deoxy-manno-octulosonate cytidylyltransferase">
    <location>
        <begin position="1"/>
        <end position="248"/>
    </location>
</feature>
<reference key="1">
    <citation type="journal article" date="2011" name="J. Bacteriol.">
        <title>Comparative genomics of 28 Salmonella enterica isolates: evidence for CRISPR-mediated adaptive sublineage evolution.</title>
        <authorList>
            <person name="Fricke W.F."/>
            <person name="Mammel M.K."/>
            <person name="McDermott P.F."/>
            <person name="Tartera C."/>
            <person name="White D.G."/>
            <person name="Leclerc J.E."/>
            <person name="Ravel J."/>
            <person name="Cebula T.A."/>
        </authorList>
    </citation>
    <scope>NUCLEOTIDE SEQUENCE [LARGE SCALE GENOMIC DNA]</scope>
    <source>
        <strain>SL254</strain>
    </source>
</reference>
<sequence length="248" mass="27432">MSFVVIIPARFSSTRLPGKPLVDINGKPMIVHVLERARESGAERIIVATDHEDVARAVEAAGGEVCMTRADHQSGTERLAEVVEKCGFSDDTVIVNVQGDEPMIPAVIIRQVAENLAQRQVGMATLAVPIHSAEEAFNPNAVKVVLDAEGYALYFSRATIPWDRDRFAKSLETVGDTCLRHLGIYGYRAGFIRRYVSWQPSPLEHIEMLEQLRVLWYGEKIHVAVAKAVPGTGVDTADDLERVRAEMR</sequence>
<dbReference type="EC" id="2.7.7.38" evidence="1"/>
<dbReference type="EMBL" id="CP001113">
    <property type="protein sequence ID" value="ACF64616.1"/>
    <property type="molecule type" value="Genomic_DNA"/>
</dbReference>
<dbReference type="RefSeq" id="WP_000011576.1">
    <property type="nucleotide sequence ID" value="NZ_CCMR01000003.1"/>
</dbReference>
<dbReference type="SMR" id="B4T152"/>
<dbReference type="KEGG" id="see:SNSL254_A1021"/>
<dbReference type="HOGENOM" id="CLU_065038_1_0_6"/>
<dbReference type="UniPathway" id="UPA00030"/>
<dbReference type="UniPathway" id="UPA00358">
    <property type="reaction ID" value="UER00476"/>
</dbReference>
<dbReference type="Proteomes" id="UP000008824">
    <property type="component" value="Chromosome"/>
</dbReference>
<dbReference type="GO" id="GO:0005829">
    <property type="term" value="C:cytosol"/>
    <property type="evidence" value="ECO:0007669"/>
    <property type="project" value="TreeGrafter"/>
</dbReference>
<dbReference type="GO" id="GO:0008690">
    <property type="term" value="F:3-deoxy-manno-octulosonate cytidylyltransferase activity"/>
    <property type="evidence" value="ECO:0007669"/>
    <property type="project" value="UniProtKB-UniRule"/>
</dbReference>
<dbReference type="GO" id="GO:0033468">
    <property type="term" value="P:CMP-keto-3-deoxy-D-manno-octulosonic acid biosynthetic process"/>
    <property type="evidence" value="ECO:0007669"/>
    <property type="project" value="UniProtKB-UniRule"/>
</dbReference>
<dbReference type="GO" id="GO:0009103">
    <property type="term" value="P:lipopolysaccharide biosynthetic process"/>
    <property type="evidence" value="ECO:0007669"/>
    <property type="project" value="UniProtKB-UniRule"/>
</dbReference>
<dbReference type="CDD" id="cd02517">
    <property type="entry name" value="CMP-KDO-Synthetase"/>
    <property type="match status" value="1"/>
</dbReference>
<dbReference type="FunFam" id="3.90.550.10:FF:000011">
    <property type="entry name" value="3-deoxy-manno-octulosonate cytidylyltransferase"/>
    <property type="match status" value="1"/>
</dbReference>
<dbReference type="Gene3D" id="3.90.550.10">
    <property type="entry name" value="Spore Coat Polysaccharide Biosynthesis Protein SpsA, Chain A"/>
    <property type="match status" value="1"/>
</dbReference>
<dbReference type="HAMAP" id="MF_00057">
    <property type="entry name" value="KdsB"/>
    <property type="match status" value="1"/>
</dbReference>
<dbReference type="InterPro" id="IPR003329">
    <property type="entry name" value="Cytidylyl_trans"/>
</dbReference>
<dbReference type="InterPro" id="IPR004528">
    <property type="entry name" value="KdsB"/>
</dbReference>
<dbReference type="InterPro" id="IPR029044">
    <property type="entry name" value="Nucleotide-diphossugar_trans"/>
</dbReference>
<dbReference type="NCBIfam" id="TIGR00466">
    <property type="entry name" value="kdsB"/>
    <property type="match status" value="1"/>
</dbReference>
<dbReference type="NCBIfam" id="NF003950">
    <property type="entry name" value="PRK05450.1-3"/>
    <property type="match status" value="1"/>
</dbReference>
<dbReference type="NCBIfam" id="NF003952">
    <property type="entry name" value="PRK05450.1-5"/>
    <property type="match status" value="1"/>
</dbReference>
<dbReference type="NCBIfam" id="NF009905">
    <property type="entry name" value="PRK13368.1"/>
    <property type="match status" value="1"/>
</dbReference>
<dbReference type="PANTHER" id="PTHR42866">
    <property type="entry name" value="3-DEOXY-MANNO-OCTULOSONATE CYTIDYLYLTRANSFERASE"/>
    <property type="match status" value="1"/>
</dbReference>
<dbReference type="PANTHER" id="PTHR42866:SF2">
    <property type="entry name" value="3-DEOXY-MANNO-OCTULOSONATE CYTIDYLYLTRANSFERASE, MITOCHONDRIAL"/>
    <property type="match status" value="1"/>
</dbReference>
<dbReference type="Pfam" id="PF02348">
    <property type="entry name" value="CTP_transf_3"/>
    <property type="match status" value="1"/>
</dbReference>
<dbReference type="SUPFAM" id="SSF53448">
    <property type="entry name" value="Nucleotide-diphospho-sugar transferases"/>
    <property type="match status" value="1"/>
</dbReference>